<name>DER_BACLD</name>
<feature type="chain" id="PRO_1000011565" description="GTPase Der">
    <location>
        <begin position="1"/>
        <end position="436"/>
    </location>
</feature>
<feature type="domain" description="EngA-type G 1">
    <location>
        <begin position="4"/>
        <end position="167"/>
    </location>
</feature>
<feature type="domain" description="EngA-type G 2">
    <location>
        <begin position="176"/>
        <end position="351"/>
    </location>
</feature>
<feature type="domain" description="KH-like" evidence="1">
    <location>
        <begin position="352"/>
        <end position="436"/>
    </location>
</feature>
<feature type="binding site" evidence="1">
    <location>
        <begin position="10"/>
        <end position="17"/>
    </location>
    <ligand>
        <name>GTP</name>
        <dbReference type="ChEBI" id="CHEBI:37565"/>
        <label>1</label>
    </ligand>
</feature>
<feature type="binding site" evidence="1">
    <location>
        <begin position="57"/>
        <end position="61"/>
    </location>
    <ligand>
        <name>GTP</name>
        <dbReference type="ChEBI" id="CHEBI:37565"/>
        <label>1</label>
    </ligand>
</feature>
<feature type="binding site" evidence="1">
    <location>
        <begin position="119"/>
        <end position="122"/>
    </location>
    <ligand>
        <name>GTP</name>
        <dbReference type="ChEBI" id="CHEBI:37565"/>
        <label>1</label>
    </ligand>
</feature>
<feature type="binding site" evidence="1">
    <location>
        <begin position="182"/>
        <end position="189"/>
    </location>
    <ligand>
        <name>GTP</name>
        <dbReference type="ChEBI" id="CHEBI:37565"/>
        <label>2</label>
    </ligand>
</feature>
<feature type="binding site" evidence="1">
    <location>
        <begin position="229"/>
        <end position="233"/>
    </location>
    <ligand>
        <name>GTP</name>
        <dbReference type="ChEBI" id="CHEBI:37565"/>
        <label>2</label>
    </ligand>
</feature>
<feature type="binding site" evidence="1">
    <location>
        <begin position="294"/>
        <end position="297"/>
    </location>
    <ligand>
        <name>GTP</name>
        <dbReference type="ChEBI" id="CHEBI:37565"/>
        <label>2</label>
    </ligand>
</feature>
<keyword id="KW-0342">GTP-binding</keyword>
<keyword id="KW-0547">Nucleotide-binding</keyword>
<keyword id="KW-1185">Reference proteome</keyword>
<keyword id="KW-0677">Repeat</keyword>
<keyword id="KW-0690">Ribosome biogenesis</keyword>
<proteinExistence type="inferred from homology"/>
<accession>Q65I15</accession>
<accession>Q62TG3</accession>
<comment type="function">
    <text evidence="1">GTPase that plays an essential role in the late steps of ribosome biogenesis.</text>
</comment>
<comment type="subunit">
    <text evidence="1">Associates with the 50S ribosomal subunit.</text>
</comment>
<comment type="similarity">
    <text evidence="1">Belongs to the TRAFAC class TrmE-Era-EngA-EngB-Septin-like GTPase superfamily. EngA (Der) GTPase family.</text>
</comment>
<sequence length="436" mass="48980">MGKPVVAIVGRPNVGKSTIFNRIAGERISIVEDTPGVTRDRIYSSAEWLNHDFNLIDTGGIEVGDEPFLAQIRHQAEIAMEEADVIIFMTNGREGVTAADEEVAKILYRTKKPVVLAVNKVDNPEMRANIYDFYALGFGEPFPISGTHGLGLGDLLDAVSEHFKNIPETKYEDEVVQFCLIGRPNVGKSSLVNAMIGEERVIVSNIAGTTRDAIDTRFTYNQRDFVIVDTAGMRKKGKVYEATEKYSVLRALKAIDRSEVVCVVLDGEEGIIEQDKRIAGYAHEAGKAVVIVVNKWDAVEKDERTMKEFEEKVRDHFQFLDYAPVLFMSALTKKRIHTLMPAVMTASENHSMRVQTNILNDIIMDAVAMNPTPTHNGNRLKIYYATQVAVKPPTFVVFVNDPELMHFSYERFLENRIRDAFGFEGTPIRIFARARK</sequence>
<reference key="1">
    <citation type="journal article" date="2004" name="J. Mol. Microbiol. Biotechnol.">
        <title>The complete genome sequence of Bacillus licheniformis DSM13, an organism with great industrial potential.</title>
        <authorList>
            <person name="Veith B."/>
            <person name="Herzberg C."/>
            <person name="Steckel S."/>
            <person name="Feesche J."/>
            <person name="Maurer K.H."/>
            <person name="Ehrenreich P."/>
            <person name="Baeumer S."/>
            <person name="Henne A."/>
            <person name="Liesegang H."/>
            <person name="Merkl R."/>
            <person name="Ehrenreich A."/>
            <person name="Gottschalk G."/>
        </authorList>
    </citation>
    <scope>NUCLEOTIDE SEQUENCE [LARGE SCALE GENOMIC DNA]</scope>
    <source>
        <strain>ATCC 14580 / DSM 13 / JCM 2505 / CCUG 7422 / NBRC 12200 / NCIMB 9375 / NCTC 10341 / NRRL NRS-1264 / Gibson 46</strain>
    </source>
</reference>
<reference key="2">
    <citation type="journal article" date="2004" name="Genome Biol.">
        <title>Complete genome sequence of the industrial bacterium Bacillus licheniformis and comparisons with closely related Bacillus species.</title>
        <authorList>
            <person name="Rey M.W."/>
            <person name="Ramaiya P."/>
            <person name="Nelson B.A."/>
            <person name="Brody-Karpin S.D."/>
            <person name="Zaretsky E.J."/>
            <person name="Tang M."/>
            <person name="Lopez de Leon A."/>
            <person name="Xiang H."/>
            <person name="Gusti V."/>
            <person name="Clausen I.G."/>
            <person name="Olsen P.B."/>
            <person name="Rasmussen M.D."/>
            <person name="Andersen J.T."/>
            <person name="Joergensen P.L."/>
            <person name="Larsen T.S."/>
            <person name="Sorokin A."/>
            <person name="Bolotin A."/>
            <person name="Lapidus A."/>
            <person name="Galleron N."/>
            <person name="Ehrlich S.D."/>
            <person name="Berka R.M."/>
        </authorList>
    </citation>
    <scope>NUCLEOTIDE SEQUENCE [LARGE SCALE GENOMIC DNA]</scope>
    <source>
        <strain>ATCC 14580 / DSM 13 / JCM 2505 / CCUG 7422 / NBRC 12200 / NCIMB 9375 / NCTC 10341 / NRRL NRS-1264 / Gibson 46</strain>
    </source>
</reference>
<protein>
    <recommendedName>
        <fullName evidence="1">GTPase Der</fullName>
    </recommendedName>
    <alternativeName>
        <fullName evidence="1">GTP-binding protein EngA</fullName>
    </alternativeName>
</protein>
<gene>
    <name evidence="1" type="primary">der</name>
    <name type="synonym">engA</name>
    <name type="ordered locus">BLi02421</name>
    <name type="ordered locus">BL02792</name>
</gene>
<dbReference type="EMBL" id="CP000002">
    <property type="protein sequence ID" value="AAU23946.2"/>
    <property type="molecule type" value="Genomic_DNA"/>
</dbReference>
<dbReference type="EMBL" id="AE017333">
    <property type="protein sequence ID" value="AAU41299.1"/>
    <property type="molecule type" value="Genomic_DNA"/>
</dbReference>
<dbReference type="RefSeq" id="WP_003183017.1">
    <property type="nucleotide sequence ID" value="NC_006322.1"/>
</dbReference>
<dbReference type="SMR" id="Q65I15"/>
<dbReference type="STRING" id="279010.BL02792"/>
<dbReference type="GeneID" id="92860981"/>
<dbReference type="KEGG" id="bld:BLi02421"/>
<dbReference type="KEGG" id="bli:BL02792"/>
<dbReference type="eggNOG" id="COG1160">
    <property type="taxonomic scope" value="Bacteria"/>
</dbReference>
<dbReference type="HOGENOM" id="CLU_016077_6_2_9"/>
<dbReference type="Proteomes" id="UP000000606">
    <property type="component" value="Chromosome"/>
</dbReference>
<dbReference type="Bgee" id="BL02792">
    <property type="expression patterns" value="Expressed in blastula and 12 other cell types or tissues"/>
</dbReference>
<dbReference type="GO" id="GO:0005525">
    <property type="term" value="F:GTP binding"/>
    <property type="evidence" value="ECO:0007669"/>
    <property type="project" value="UniProtKB-UniRule"/>
</dbReference>
<dbReference type="GO" id="GO:0043022">
    <property type="term" value="F:ribosome binding"/>
    <property type="evidence" value="ECO:0007669"/>
    <property type="project" value="TreeGrafter"/>
</dbReference>
<dbReference type="GO" id="GO:0042254">
    <property type="term" value="P:ribosome biogenesis"/>
    <property type="evidence" value="ECO:0007669"/>
    <property type="project" value="UniProtKB-KW"/>
</dbReference>
<dbReference type="CDD" id="cd01894">
    <property type="entry name" value="EngA1"/>
    <property type="match status" value="1"/>
</dbReference>
<dbReference type="CDD" id="cd01895">
    <property type="entry name" value="EngA2"/>
    <property type="match status" value="1"/>
</dbReference>
<dbReference type="FunFam" id="3.30.300.20:FF:000004">
    <property type="entry name" value="GTPase Der"/>
    <property type="match status" value="1"/>
</dbReference>
<dbReference type="FunFam" id="3.40.50.300:FF:000040">
    <property type="entry name" value="GTPase Der"/>
    <property type="match status" value="1"/>
</dbReference>
<dbReference type="FunFam" id="3.40.50.300:FF:000057">
    <property type="entry name" value="GTPase Der"/>
    <property type="match status" value="1"/>
</dbReference>
<dbReference type="Gene3D" id="3.30.300.20">
    <property type="match status" value="1"/>
</dbReference>
<dbReference type="Gene3D" id="3.40.50.300">
    <property type="entry name" value="P-loop containing nucleotide triphosphate hydrolases"/>
    <property type="match status" value="2"/>
</dbReference>
<dbReference type="HAMAP" id="MF_00195">
    <property type="entry name" value="GTPase_Der"/>
    <property type="match status" value="1"/>
</dbReference>
<dbReference type="InterPro" id="IPR031166">
    <property type="entry name" value="G_ENGA"/>
</dbReference>
<dbReference type="InterPro" id="IPR006073">
    <property type="entry name" value="GTP-bd"/>
</dbReference>
<dbReference type="InterPro" id="IPR016484">
    <property type="entry name" value="GTPase_Der"/>
</dbReference>
<dbReference type="InterPro" id="IPR032859">
    <property type="entry name" value="KH_dom-like"/>
</dbReference>
<dbReference type="InterPro" id="IPR015946">
    <property type="entry name" value="KH_dom-like_a/b"/>
</dbReference>
<dbReference type="InterPro" id="IPR027417">
    <property type="entry name" value="P-loop_NTPase"/>
</dbReference>
<dbReference type="InterPro" id="IPR005225">
    <property type="entry name" value="Small_GTP-bd"/>
</dbReference>
<dbReference type="NCBIfam" id="TIGR03594">
    <property type="entry name" value="GTPase_EngA"/>
    <property type="match status" value="1"/>
</dbReference>
<dbReference type="NCBIfam" id="TIGR00231">
    <property type="entry name" value="small_GTP"/>
    <property type="match status" value="2"/>
</dbReference>
<dbReference type="PANTHER" id="PTHR43834">
    <property type="entry name" value="GTPASE DER"/>
    <property type="match status" value="1"/>
</dbReference>
<dbReference type="PANTHER" id="PTHR43834:SF6">
    <property type="entry name" value="GTPASE DER"/>
    <property type="match status" value="1"/>
</dbReference>
<dbReference type="Pfam" id="PF14714">
    <property type="entry name" value="KH_dom-like"/>
    <property type="match status" value="1"/>
</dbReference>
<dbReference type="Pfam" id="PF01926">
    <property type="entry name" value="MMR_HSR1"/>
    <property type="match status" value="2"/>
</dbReference>
<dbReference type="PIRSF" id="PIRSF006485">
    <property type="entry name" value="GTP-binding_EngA"/>
    <property type="match status" value="1"/>
</dbReference>
<dbReference type="SUPFAM" id="SSF52540">
    <property type="entry name" value="P-loop containing nucleoside triphosphate hydrolases"/>
    <property type="match status" value="2"/>
</dbReference>
<dbReference type="PROSITE" id="PS51712">
    <property type="entry name" value="G_ENGA"/>
    <property type="match status" value="2"/>
</dbReference>
<organism>
    <name type="scientific">Bacillus licheniformis (strain ATCC 14580 / DSM 13 / JCM 2505 / CCUG 7422 / NBRC 12200 / NCIMB 9375 / NCTC 10341 / NRRL NRS-1264 / Gibson 46)</name>
    <dbReference type="NCBI Taxonomy" id="279010"/>
    <lineage>
        <taxon>Bacteria</taxon>
        <taxon>Bacillati</taxon>
        <taxon>Bacillota</taxon>
        <taxon>Bacilli</taxon>
        <taxon>Bacillales</taxon>
        <taxon>Bacillaceae</taxon>
        <taxon>Bacillus</taxon>
    </lineage>
</organism>
<evidence type="ECO:0000255" key="1">
    <source>
        <dbReference type="HAMAP-Rule" id="MF_00195"/>
    </source>
</evidence>